<organism>
    <name type="scientific">Staphylococcus epidermidis (strain ATCC 12228 / FDA PCI 1200)</name>
    <dbReference type="NCBI Taxonomy" id="176280"/>
    <lineage>
        <taxon>Bacteria</taxon>
        <taxon>Bacillati</taxon>
        <taxon>Bacillota</taxon>
        <taxon>Bacilli</taxon>
        <taxon>Bacillales</taxon>
        <taxon>Staphylococcaceae</taxon>
        <taxon>Staphylococcus</taxon>
    </lineage>
</organism>
<feature type="chain" id="PRO_0000147965" description="Phosphoglucosamine mutase">
    <location>
        <begin position="1"/>
        <end position="451"/>
    </location>
</feature>
<feature type="active site" description="Phosphoserine intermediate" evidence="1">
    <location>
        <position position="102"/>
    </location>
</feature>
<feature type="binding site" description="via phosphate group" evidence="1">
    <location>
        <position position="102"/>
    </location>
    <ligand>
        <name>Mg(2+)</name>
        <dbReference type="ChEBI" id="CHEBI:18420"/>
    </ligand>
</feature>
<feature type="binding site" evidence="1">
    <location>
        <position position="242"/>
    </location>
    <ligand>
        <name>Mg(2+)</name>
        <dbReference type="ChEBI" id="CHEBI:18420"/>
    </ligand>
</feature>
<feature type="binding site" evidence="1">
    <location>
        <position position="244"/>
    </location>
    <ligand>
        <name>Mg(2+)</name>
        <dbReference type="ChEBI" id="CHEBI:18420"/>
    </ligand>
</feature>
<feature type="binding site" evidence="1">
    <location>
        <position position="246"/>
    </location>
    <ligand>
        <name>Mg(2+)</name>
        <dbReference type="ChEBI" id="CHEBI:18420"/>
    </ligand>
</feature>
<feature type="modified residue" description="Phosphoserine" evidence="1">
    <location>
        <position position="102"/>
    </location>
</feature>
<protein>
    <recommendedName>
        <fullName evidence="1">Phosphoglucosamine mutase</fullName>
        <ecNumber evidence="1">5.4.2.10</ecNumber>
    </recommendedName>
</protein>
<evidence type="ECO:0000255" key="1">
    <source>
        <dbReference type="HAMAP-Rule" id="MF_01554"/>
    </source>
</evidence>
<keyword id="KW-0413">Isomerase</keyword>
<keyword id="KW-0460">Magnesium</keyword>
<keyword id="KW-0479">Metal-binding</keyword>
<keyword id="KW-0597">Phosphoprotein</keyword>
<reference key="1">
    <citation type="journal article" date="2003" name="Mol. Microbiol.">
        <title>Genome-based analysis of virulence genes in a non-biofilm-forming Staphylococcus epidermidis strain (ATCC 12228).</title>
        <authorList>
            <person name="Zhang Y.-Q."/>
            <person name="Ren S.-X."/>
            <person name="Li H.-L."/>
            <person name="Wang Y.-X."/>
            <person name="Fu G."/>
            <person name="Yang J."/>
            <person name="Qin Z.-Q."/>
            <person name="Miao Y.-G."/>
            <person name="Wang W.-Y."/>
            <person name="Chen R.-S."/>
            <person name="Shen Y."/>
            <person name="Chen Z."/>
            <person name="Yuan Z.-H."/>
            <person name="Zhao G.-P."/>
            <person name="Qu D."/>
            <person name="Danchin A."/>
            <person name="Wen Y.-M."/>
        </authorList>
    </citation>
    <scope>NUCLEOTIDE SEQUENCE [LARGE SCALE GENOMIC DNA]</scope>
    <source>
        <strain>ATCC 12228 / FDA PCI 1200</strain>
    </source>
</reference>
<proteinExistence type="inferred from homology"/>
<accession>Q8CNH0</accession>
<dbReference type="EC" id="5.4.2.10" evidence="1"/>
<dbReference type="EMBL" id="AE015929">
    <property type="protein sequence ID" value="AAO05351.1"/>
    <property type="molecule type" value="Genomic_DNA"/>
</dbReference>
<dbReference type="RefSeq" id="NP_765307.1">
    <property type="nucleotide sequence ID" value="NC_004461.1"/>
</dbReference>
<dbReference type="RefSeq" id="WP_002457133.1">
    <property type="nucleotide sequence ID" value="NZ_WBME01000065.1"/>
</dbReference>
<dbReference type="SMR" id="Q8CNH0"/>
<dbReference type="GeneID" id="50018151"/>
<dbReference type="KEGG" id="sep:SE_1752"/>
<dbReference type="PATRIC" id="fig|176280.10.peg.1711"/>
<dbReference type="eggNOG" id="COG1109">
    <property type="taxonomic scope" value="Bacteria"/>
</dbReference>
<dbReference type="HOGENOM" id="CLU_016950_7_0_9"/>
<dbReference type="OrthoDB" id="9806956at2"/>
<dbReference type="Proteomes" id="UP000001411">
    <property type="component" value="Chromosome"/>
</dbReference>
<dbReference type="GO" id="GO:0005829">
    <property type="term" value="C:cytosol"/>
    <property type="evidence" value="ECO:0007669"/>
    <property type="project" value="TreeGrafter"/>
</dbReference>
<dbReference type="GO" id="GO:0000287">
    <property type="term" value="F:magnesium ion binding"/>
    <property type="evidence" value="ECO:0007669"/>
    <property type="project" value="UniProtKB-UniRule"/>
</dbReference>
<dbReference type="GO" id="GO:0008966">
    <property type="term" value="F:phosphoglucosamine mutase activity"/>
    <property type="evidence" value="ECO:0007669"/>
    <property type="project" value="UniProtKB-UniRule"/>
</dbReference>
<dbReference type="GO" id="GO:0004615">
    <property type="term" value="F:phosphomannomutase activity"/>
    <property type="evidence" value="ECO:0007669"/>
    <property type="project" value="TreeGrafter"/>
</dbReference>
<dbReference type="GO" id="GO:0005975">
    <property type="term" value="P:carbohydrate metabolic process"/>
    <property type="evidence" value="ECO:0007669"/>
    <property type="project" value="InterPro"/>
</dbReference>
<dbReference type="GO" id="GO:0009252">
    <property type="term" value="P:peptidoglycan biosynthetic process"/>
    <property type="evidence" value="ECO:0007669"/>
    <property type="project" value="TreeGrafter"/>
</dbReference>
<dbReference type="GO" id="GO:0006048">
    <property type="term" value="P:UDP-N-acetylglucosamine biosynthetic process"/>
    <property type="evidence" value="ECO:0007669"/>
    <property type="project" value="TreeGrafter"/>
</dbReference>
<dbReference type="CDD" id="cd05802">
    <property type="entry name" value="GlmM"/>
    <property type="match status" value="1"/>
</dbReference>
<dbReference type="FunFam" id="3.30.310.50:FF:000001">
    <property type="entry name" value="Phosphoglucosamine mutase"/>
    <property type="match status" value="1"/>
</dbReference>
<dbReference type="FunFam" id="3.40.120.10:FF:000001">
    <property type="entry name" value="Phosphoglucosamine mutase"/>
    <property type="match status" value="1"/>
</dbReference>
<dbReference type="FunFam" id="3.40.120.10:FF:000002">
    <property type="entry name" value="Phosphoglucosamine mutase"/>
    <property type="match status" value="1"/>
</dbReference>
<dbReference type="Gene3D" id="3.40.120.10">
    <property type="entry name" value="Alpha-D-Glucose-1,6-Bisphosphate, subunit A, domain 3"/>
    <property type="match status" value="3"/>
</dbReference>
<dbReference type="Gene3D" id="3.30.310.50">
    <property type="entry name" value="Alpha-D-phosphohexomutase, C-terminal domain"/>
    <property type="match status" value="1"/>
</dbReference>
<dbReference type="HAMAP" id="MF_01554_B">
    <property type="entry name" value="GlmM_B"/>
    <property type="match status" value="1"/>
</dbReference>
<dbReference type="InterPro" id="IPR005844">
    <property type="entry name" value="A-D-PHexomutase_a/b/a-I"/>
</dbReference>
<dbReference type="InterPro" id="IPR016055">
    <property type="entry name" value="A-D-PHexomutase_a/b/a-I/II/III"/>
</dbReference>
<dbReference type="InterPro" id="IPR005845">
    <property type="entry name" value="A-D-PHexomutase_a/b/a-II"/>
</dbReference>
<dbReference type="InterPro" id="IPR005846">
    <property type="entry name" value="A-D-PHexomutase_a/b/a-III"/>
</dbReference>
<dbReference type="InterPro" id="IPR005843">
    <property type="entry name" value="A-D-PHexomutase_C"/>
</dbReference>
<dbReference type="InterPro" id="IPR036900">
    <property type="entry name" value="A-D-PHexomutase_C_sf"/>
</dbReference>
<dbReference type="InterPro" id="IPR016066">
    <property type="entry name" value="A-D-PHexomutase_CS"/>
</dbReference>
<dbReference type="InterPro" id="IPR005841">
    <property type="entry name" value="Alpha-D-phosphohexomutase_SF"/>
</dbReference>
<dbReference type="InterPro" id="IPR006352">
    <property type="entry name" value="GlmM_bact"/>
</dbReference>
<dbReference type="InterPro" id="IPR050060">
    <property type="entry name" value="Phosphoglucosamine_mutase"/>
</dbReference>
<dbReference type="NCBIfam" id="TIGR01455">
    <property type="entry name" value="glmM"/>
    <property type="match status" value="1"/>
</dbReference>
<dbReference type="NCBIfam" id="NF008139">
    <property type="entry name" value="PRK10887.1"/>
    <property type="match status" value="1"/>
</dbReference>
<dbReference type="PANTHER" id="PTHR42946:SF1">
    <property type="entry name" value="PHOSPHOGLUCOMUTASE (ALPHA-D-GLUCOSE-1,6-BISPHOSPHATE-DEPENDENT)"/>
    <property type="match status" value="1"/>
</dbReference>
<dbReference type="PANTHER" id="PTHR42946">
    <property type="entry name" value="PHOSPHOHEXOSE MUTASE"/>
    <property type="match status" value="1"/>
</dbReference>
<dbReference type="Pfam" id="PF02878">
    <property type="entry name" value="PGM_PMM_I"/>
    <property type="match status" value="1"/>
</dbReference>
<dbReference type="Pfam" id="PF02879">
    <property type="entry name" value="PGM_PMM_II"/>
    <property type="match status" value="1"/>
</dbReference>
<dbReference type="Pfam" id="PF02880">
    <property type="entry name" value="PGM_PMM_III"/>
    <property type="match status" value="1"/>
</dbReference>
<dbReference type="Pfam" id="PF00408">
    <property type="entry name" value="PGM_PMM_IV"/>
    <property type="match status" value="1"/>
</dbReference>
<dbReference type="PRINTS" id="PR00509">
    <property type="entry name" value="PGMPMM"/>
</dbReference>
<dbReference type="SUPFAM" id="SSF55957">
    <property type="entry name" value="Phosphoglucomutase, C-terminal domain"/>
    <property type="match status" value="1"/>
</dbReference>
<dbReference type="SUPFAM" id="SSF53738">
    <property type="entry name" value="Phosphoglucomutase, first 3 domains"/>
    <property type="match status" value="3"/>
</dbReference>
<dbReference type="PROSITE" id="PS00710">
    <property type="entry name" value="PGM_PMM"/>
    <property type="match status" value="1"/>
</dbReference>
<comment type="function">
    <text evidence="1">Catalyzes the conversion of glucosamine-6-phosphate to glucosamine-1-phosphate.</text>
</comment>
<comment type="catalytic activity">
    <reaction evidence="1">
        <text>alpha-D-glucosamine 1-phosphate = D-glucosamine 6-phosphate</text>
        <dbReference type="Rhea" id="RHEA:23424"/>
        <dbReference type="ChEBI" id="CHEBI:58516"/>
        <dbReference type="ChEBI" id="CHEBI:58725"/>
        <dbReference type="EC" id="5.4.2.10"/>
    </reaction>
</comment>
<comment type="cofactor">
    <cofactor evidence="1">
        <name>Mg(2+)</name>
        <dbReference type="ChEBI" id="CHEBI:18420"/>
    </cofactor>
    <text evidence="1">Binds 1 Mg(2+) ion per subunit.</text>
</comment>
<comment type="PTM">
    <text evidence="1">Activated by phosphorylation.</text>
</comment>
<comment type="similarity">
    <text evidence="1">Belongs to the phosphohexose mutase family.</text>
</comment>
<sequence length="451" mass="49215">MGKYFGTDGVRGVANQELTPELAFKLGRYGGYVLAHNKGEKHPRVLVGRDTRVSGEMLESALIAGLISIGAEVMRLGVISTPGVAYLTKEMEAALGVMISASHNPVADNGIKFFGSDGFKLSDDQENEIEQLLDQTNPDLPRPVGEDIVHYSDYFEGAQKYLSYLKSTVDVNFEGLKIVLDGANGSTSSLAPFLFGDLEADTETIGCNPDGYNINEQCGSTHPEKLAEAVLETESDFGLAFDGDGDRIIAVDENGQIVDGDQIMFIIGQEMYKNQELNGNMIVSTVMSNLGFYKALEKEGIQSNKTKVGDRYVVEEMRRGNYNLGGEQSGHIVLMDYNTTGDGLLTGVQLASVIKMSGKTLSELASQMKKYPQSLINVRVTDKYRVEENIHVQEIMTKVETEMNGEGRILVRPSGTEPLVRVMVEAATDADAERYAQSIADVVEDKMGLDK</sequence>
<name>GLMM_STAES</name>
<gene>
    <name evidence="1" type="primary">glmM</name>
    <name type="ordered locus">SE_1752</name>
</gene>